<reference key="1">
    <citation type="journal article" date="2002" name="Proc. Natl. Acad. Sci. U.S.A.">
        <title>Extensive mosaic structure revealed by the complete genome sequence of uropathogenic Escherichia coli.</title>
        <authorList>
            <person name="Welch R.A."/>
            <person name="Burland V."/>
            <person name="Plunkett G. III"/>
            <person name="Redford P."/>
            <person name="Roesch P."/>
            <person name="Rasko D."/>
            <person name="Buckles E.L."/>
            <person name="Liou S.-R."/>
            <person name="Boutin A."/>
            <person name="Hackett J."/>
            <person name="Stroud D."/>
            <person name="Mayhew G.F."/>
            <person name="Rose D.J."/>
            <person name="Zhou S."/>
            <person name="Schwartz D.C."/>
            <person name="Perna N.T."/>
            <person name="Mobley H.L.T."/>
            <person name="Donnenberg M.S."/>
            <person name="Blattner F.R."/>
        </authorList>
    </citation>
    <scope>NUCLEOTIDE SEQUENCE [LARGE SCALE GENOMIC DNA]</scope>
    <source>
        <strain>CFT073 / ATCC 700928 / UPEC</strain>
    </source>
</reference>
<dbReference type="EMBL" id="AE014075">
    <property type="protein sequence ID" value="AAN78549.1"/>
    <property type="molecule type" value="Genomic_DNA"/>
</dbReference>
<dbReference type="RefSeq" id="WP_001287715.1">
    <property type="nucleotide sequence ID" value="NZ_CP051263.1"/>
</dbReference>
<dbReference type="SMR" id="P68645"/>
<dbReference type="STRING" id="199310.c0053"/>
<dbReference type="KEGG" id="ecc:c0053"/>
<dbReference type="eggNOG" id="COG0644">
    <property type="taxonomic scope" value="Bacteria"/>
</dbReference>
<dbReference type="HOGENOM" id="CLU_050977_0_0_6"/>
<dbReference type="BioCyc" id="ECOL199310:C0053-MONOMER"/>
<dbReference type="Proteomes" id="UP000001410">
    <property type="component" value="Chromosome"/>
</dbReference>
<dbReference type="GO" id="GO:0071949">
    <property type="term" value="F:FAD binding"/>
    <property type="evidence" value="ECO:0007669"/>
    <property type="project" value="InterPro"/>
</dbReference>
<dbReference type="GO" id="GO:0016491">
    <property type="term" value="F:oxidoreductase activity"/>
    <property type="evidence" value="ECO:0007669"/>
    <property type="project" value="UniProtKB-KW"/>
</dbReference>
<dbReference type="FunFam" id="3.50.50.60:FF:000120">
    <property type="entry name" value="Putative oxidoreductase FixC"/>
    <property type="match status" value="1"/>
</dbReference>
<dbReference type="Gene3D" id="3.50.50.60">
    <property type="entry name" value="FAD/NAD(P)-binding domain"/>
    <property type="match status" value="1"/>
</dbReference>
<dbReference type="InterPro" id="IPR002938">
    <property type="entry name" value="FAD-bd"/>
</dbReference>
<dbReference type="InterPro" id="IPR036188">
    <property type="entry name" value="FAD/NAD-bd_sf"/>
</dbReference>
<dbReference type="InterPro" id="IPR039651">
    <property type="entry name" value="FixC-like"/>
</dbReference>
<dbReference type="NCBIfam" id="NF007450">
    <property type="entry name" value="PRK10015.1"/>
    <property type="match status" value="1"/>
</dbReference>
<dbReference type="NCBIfam" id="NF007542">
    <property type="entry name" value="PRK10157.1"/>
    <property type="match status" value="1"/>
</dbReference>
<dbReference type="PANTHER" id="PTHR43624">
    <property type="entry name" value="ELECTRON TRANSFER FLAVOPROTEIN-QUINONE OXIDOREDUCTASE YDIS-RELATED"/>
    <property type="match status" value="1"/>
</dbReference>
<dbReference type="PANTHER" id="PTHR43624:SF1">
    <property type="entry name" value="PROTEIN FIXC"/>
    <property type="match status" value="1"/>
</dbReference>
<dbReference type="Pfam" id="PF01494">
    <property type="entry name" value="FAD_binding_3"/>
    <property type="match status" value="1"/>
</dbReference>
<dbReference type="PRINTS" id="PR00420">
    <property type="entry name" value="RNGMNOXGNASE"/>
</dbReference>
<dbReference type="SUPFAM" id="SSF54373">
    <property type="entry name" value="FAD-linked reductases, C-terminal domain"/>
    <property type="match status" value="1"/>
</dbReference>
<dbReference type="SUPFAM" id="SSF51905">
    <property type="entry name" value="FAD/NAD(P)-binding domain"/>
    <property type="match status" value="1"/>
</dbReference>
<protein>
    <recommendedName>
        <fullName>Protein FixC</fullName>
    </recommendedName>
</protein>
<accession>P68645</accession>
<accession>P31575</accession>
<accession>P75626</accession>
<feature type="chain" id="PRO_0000200691" description="Protein FixC">
    <location>
        <begin position="1"/>
        <end position="428"/>
    </location>
</feature>
<gene>
    <name type="primary">fixC</name>
    <name type="ordered locus">c0053</name>
</gene>
<proteinExistence type="inferred from homology"/>
<sequence>MSEDIFDAIIVGAGLAGSVAALVLAREGAQVLVIERGNSAGAKNVTGGRLYAHSLEHIIPGFADSAPVERLITHEKLAFMTEKSAMTMDYCNGDETSPSQRSYSVLRSKFDAWLMEQAEEAGAQLITGIRVDNLVQRDGKVVGVEADGDVIEAKTVILADGVNSILAEKLGMAKRVKPTDVAVGVKELIELPKSVIEDRFQLQGNQGAACLFAGSPTDGLMGGGFLYTNENTLSLGLVCGLHHLHDAKKSVPQMLEDFKQHPAVAPLIAGGKLVEYSAHVVPEAGINMLPELVGDGVLIAGDAAGMCMNLGFTIRGMDLAIAAGEAAAKTVLSAMKSDDFSKQKLAEYRQHLESGPLRDMRMYQKLPAFLDNPRMFSGYPELAVGVARDLFTIDGSAPELMRKKILRHGKKVGFINLIKDGMKGVTVL</sequence>
<organism>
    <name type="scientific">Escherichia coli O6:H1 (strain CFT073 / ATCC 700928 / UPEC)</name>
    <dbReference type="NCBI Taxonomy" id="199310"/>
    <lineage>
        <taxon>Bacteria</taxon>
        <taxon>Pseudomonadati</taxon>
        <taxon>Pseudomonadota</taxon>
        <taxon>Gammaproteobacteria</taxon>
        <taxon>Enterobacterales</taxon>
        <taxon>Enterobacteriaceae</taxon>
        <taxon>Escherichia</taxon>
    </lineage>
</organism>
<comment type="function">
    <text evidence="1">Could be part of an electron transfer system required for anaerobic carnitine reduction.</text>
</comment>
<comment type="cofactor">
    <cofactor evidence="2">
        <name>FAD</name>
        <dbReference type="ChEBI" id="CHEBI:57692"/>
    </cofactor>
</comment>
<comment type="similarity">
    <text evidence="2">Belongs to the ETF-QO/FixC family.</text>
</comment>
<evidence type="ECO:0000250" key="1"/>
<evidence type="ECO:0000305" key="2"/>
<keyword id="KW-0249">Electron transport</keyword>
<keyword id="KW-0274">FAD</keyword>
<keyword id="KW-0285">Flavoprotein</keyword>
<keyword id="KW-0560">Oxidoreductase</keyword>
<keyword id="KW-1185">Reference proteome</keyword>
<keyword id="KW-0813">Transport</keyword>
<name>FIXC_ECOL6</name>